<accession>A5I7H9</accession>
<accession>A7G8R1</accession>
<protein>
    <recommendedName>
        <fullName evidence="1">Small ribosomal subunit protein uS11</fullName>
    </recommendedName>
    <alternativeName>
        <fullName evidence="3">30S ribosomal protein S11</fullName>
    </alternativeName>
</protein>
<gene>
    <name evidence="1" type="primary">rpsK</name>
    <name type="ordered locus">CBO3454</name>
    <name type="ordered locus">CLC_3398</name>
</gene>
<proteinExistence type="inferred from homology"/>
<reference key="1">
    <citation type="journal article" date="2007" name="Genome Res.">
        <title>Genome sequence of a proteolytic (Group I) Clostridium botulinum strain Hall A and comparative analysis of the clostridial genomes.</title>
        <authorList>
            <person name="Sebaihia M."/>
            <person name="Peck M.W."/>
            <person name="Minton N.P."/>
            <person name="Thomson N.R."/>
            <person name="Holden M.T.G."/>
            <person name="Mitchell W.J."/>
            <person name="Carter A.T."/>
            <person name="Bentley S.D."/>
            <person name="Mason D.R."/>
            <person name="Crossman L."/>
            <person name="Paul C.J."/>
            <person name="Ivens A."/>
            <person name="Wells-Bennik M.H.J."/>
            <person name="Davis I.J."/>
            <person name="Cerdeno-Tarraga A.M."/>
            <person name="Churcher C."/>
            <person name="Quail M.A."/>
            <person name="Chillingworth T."/>
            <person name="Feltwell T."/>
            <person name="Fraser A."/>
            <person name="Goodhead I."/>
            <person name="Hance Z."/>
            <person name="Jagels K."/>
            <person name="Larke N."/>
            <person name="Maddison M."/>
            <person name="Moule S."/>
            <person name="Mungall K."/>
            <person name="Norbertczak H."/>
            <person name="Rabbinowitsch E."/>
            <person name="Sanders M."/>
            <person name="Simmonds M."/>
            <person name="White B."/>
            <person name="Whithead S."/>
            <person name="Parkhill J."/>
        </authorList>
    </citation>
    <scope>NUCLEOTIDE SEQUENCE [LARGE SCALE GENOMIC DNA]</scope>
    <source>
        <strain>Hall / ATCC 3502 / NCTC 13319 / Type A</strain>
    </source>
</reference>
<reference key="2">
    <citation type="journal article" date="2007" name="PLoS ONE">
        <title>Analysis of the neurotoxin complex genes in Clostridium botulinum A1-A4 and B1 strains: BoNT/A3, /Ba4 and /B1 clusters are located within plasmids.</title>
        <authorList>
            <person name="Smith T.J."/>
            <person name="Hill K.K."/>
            <person name="Foley B.T."/>
            <person name="Detter J.C."/>
            <person name="Munk A.C."/>
            <person name="Bruce D.C."/>
            <person name="Doggett N.A."/>
            <person name="Smith L.A."/>
            <person name="Marks J.D."/>
            <person name="Xie G."/>
            <person name="Brettin T.S."/>
        </authorList>
    </citation>
    <scope>NUCLEOTIDE SEQUENCE [LARGE SCALE GENOMIC DNA]</scope>
    <source>
        <strain>Hall / ATCC 3502 / NCTC 13319 / Type A</strain>
    </source>
</reference>
<feature type="chain" id="PRO_0000323337" description="Small ribosomal subunit protein uS11">
    <location>
        <begin position="1"/>
        <end position="132"/>
    </location>
</feature>
<feature type="region of interest" description="Disordered" evidence="2">
    <location>
        <begin position="1"/>
        <end position="20"/>
    </location>
</feature>
<feature type="compositionally biased region" description="Basic residues" evidence="2">
    <location>
        <begin position="1"/>
        <end position="16"/>
    </location>
</feature>
<dbReference type="EMBL" id="CP000727">
    <property type="protein sequence ID" value="ABS37956.1"/>
    <property type="molecule type" value="Genomic_DNA"/>
</dbReference>
<dbReference type="EMBL" id="AM412317">
    <property type="protein sequence ID" value="CAL85014.1"/>
    <property type="molecule type" value="Genomic_DNA"/>
</dbReference>
<dbReference type="RefSeq" id="WP_003401717.1">
    <property type="nucleotide sequence ID" value="NC_009698.1"/>
</dbReference>
<dbReference type="RefSeq" id="YP_001255935.1">
    <property type="nucleotide sequence ID" value="NC_009495.1"/>
</dbReference>
<dbReference type="RefSeq" id="YP_001389176.1">
    <property type="nucleotide sequence ID" value="NC_009698.1"/>
</dbReference>
<dbReference type="SMR" id="A5I7H9"/>
<dbReference type="GeneID" id="5184361"/>
<dbReference type="KEGG" id="cbh:CLC_3398"/>
<dbReference type="KEGG" id="cbo:CBO3454"/>
<dbReference type="PATRIC" id="fig|413999.7.peg.3430"/>
<dbReference type="HOGENOM" id="CLU_072439_5_0_9"/>
<dbReference type="PRO" id="PR:A5I7H9"/>
<dbReference type="Proteomes" id="UP000001986">
    <property type="component" value="Chromosome"/>
</dbReference>
<dbReference type="GO" id="GO:0022627">
    <property type="term" value="C:cytosolic small ribosomal subunit"/>
    <property type="evidence" value="ECO:0000318"/>
    <property type="project" value="GO_Central"/>
</dbReference>
<dbReference type="GO" id="GO:0019843">
    <property type="term" value="F:rRNA binding"/>
    <property type="evidence" value="ECO:0007669"/>
    <property type="project" value="UniProtKB-UniRule"/>
</dbReference>
<dbReference type="GO" id="GO:0003735">
    <property type="term" value="F:structural constituent of ribosome"/>
    <property type="evidence" value="ECO:0000318"/>
    <property type="project" value="GO_Central"/>
</dbReference>
<dbReference type="GO" id="GO:0006412">
    <property type="term" value="P:translation"/>
    <property type="evidence" value="ECO:0000318"/>
    <property type="project" value="GO_Central"/>
</dbReference>
<dbReference type="FunFam" id="3.30.420.80:FF:000001">
    <property type="entry name" value="30S ribosomal protein S11"/>
    <property type="match status" value="1"/>
</dbReference>
<dbReference type="Gene3D" id="3.30.420.80">
    <property type="entry name" value="Ribosomal protein S11"/>
    <property type="match status" value="1"/>
</dbReference>
<dbReference type="HAMAP" id="MF_01310">
    <property type="entry name" value="Ribosomal_uS11"/>
    <property type="match status" value="1"/>
</dbReference>
<dbReference type="InterPro" id="IPR001971">
    <property type="entry name" value="Ribosomal_uS11"/>
</dbReference>
<dbReference type="InterPro" id="IPR019981">
    <property type="entry name" value="Ribosomal_uS11_bac-type"/>
</dbReference>
<dbReference type="InterPro" id="IPR018102">
    <property type="entry name" value="Ribosomal_uS11_CS"/>
</dbReference>
<dbReference type="InterPro" id="IPR036967">
    <property type="entry name" value="Ribosomal_uS11_sf"/>
</dbReference>
<dbReference type="NCBIfam" id="NF003698">
    <property type="entry name" value="PRK05309.1"/>
    <property type="match status" value="1"/>
</dbReference>
<dbReference type="NCBIfam" id="TIGR03632">
    <property type="entry name" value="uS11_bact"/>
    <property type="match status" value="1"/>
</dbReference>
<dbReference type="PANTHER" id="PTHR11759">
    <property type="entry name" value="40S RIBOSOMAL PROTEIN S14/30S RIBOSOMAL PROTEIN S11"/>
    <property type="match status" value="1"/>
</dbReference>
<dbReference type="Pfam" id="PF00411">
    <property type="entry name" value="Ribosomal_S11"/>
    <property type="match status" value="1"/>
</dbReference>
<dbReference type="PIRSF" id="PIRSF002131">
    <property type="entry name" value="Ribosomal_S11"/>
    <property type="match status" value="1"/>
</dbReference>
<dbReference type="SUPFAM" id="SSF53137">
    <property type="entry name" value="Translational machinery components"/>
    <property type="match status" value="1"/>
</dbReference>
<dbReference type="PROSITE" id="PS00054">
    <property type="entry name" value="RIBOSOMAL_S11"/>
    <property type="match status" value="1"/>
</dbReference>
<name>RS11_CLOBH</name>
<sequence>MAAGMKGKRSRRRKERKNVEHGCAHIKSTFNNSIVTITDSVGNTLSWASAGGLGFRGSRKSTPFAAQMAAETAAKAAMEHGLKSIEVYVKGPGSGREAAIRSLQAAGLEVTLIKDVTPIPHNGCRPPKRRRV</sequence>
<organism>
    <name type="scientific">Clostridium botulinum (strain Hall / ATCC 3502 / NCTC 13319 / Type A)</name>
    <dbReference type="NCBI Taxonomy" id="441771"/>
    <lineage>
        <taxon>Bacteria</taxon>
        <taxon>Bacillati</taxon>
        <taxon>Bacillota</taxon>
        <taxon>Clostridia</taxon>
        <taxon>Eubacteriales</taxon>
        <taxon>Clostridiaceae</taxon>
        <taxon>Clostridium</taxon>
    </lineage>
</organism>
<comment type="function">
    <text evidence="1">Located on the platform of the 30S subunit, it bridges several disparate RNA helices of the 16S rRNA. Forms part of the Shine-Dalgarno cleft in the 70S ribosome.</text>
</comment>
<comment type="subunit">
    <text evidence="1">Part of the 30S ribosomal subunit. Interacts with proteins S7 and S18. Binds to IF-3.</text>
</comment>
<comment type="similarity">
    <text evidence="1">Belongs to the universal ribosomal protein uS11 family.</text>
</comment>
<keyword id="KW-1185">Reference proteome</keyword>
<keyword id="KW-0687">Ribonucleoprotein</keyword>
<keyword id="KW-0689">Ribosomal protein</keyword>
<keyword id="KW-0694">RNA-binding</keyword>
<keyword id="KW-0699">rRNA-binding</keyword>
<evidence type="ECO:0000255" key="1">
    <source>
        <dbReference type="HAMAP-Rule" id="MF_01310"/>
    </source>
</evidence>
<evidence type="ECO:0000256" key="2">
    <source>
        <dbReference type="SAM" id="MobiDB-lite"/>
    </source>
</evidence>
<evidence type="ECO:0000305" key="3"/>